<feature type="chain" id="PRO_0000197518" description="Prophage integrase IntS">
    <location>
        <begin position="1"/>
        <end position="385"/>
    </location>
</feature>
<feature type="domain" description="Core-binding (CB)" evidence="2">
    <location>
        <begin position="91"/>
        <end position="172"/>
    </location>
</feature>
<feature type="domain" description="Tyr recombinase" evidence="1">
    <location>
        <begin position="195"/>
        <end position="373"/>
    </location>
</feature>
<feature type="active site" evidence="1">
    <location>
        <position position="234"/>
    </location>
</feature>
<feature type="active site" evidence="1">
    <location>
        <position position="261"/>
    </location>
</feature>
<feature type="active site" evidence="1">
    <location>
        <position position="324"/>
    </location>
</feature>
<feature type="active site" evidence="1">
    <location>
        <position position="327"/>
    </location>
</feature>
<feature type="active site" evidence="1">
    <location>
        <position position="350"/>
    </location>
</feature>
<feature type="active site" description="O-(3'-phospho-DNA)-tyrosine intermediate" evidence="1">
    <location>
        <position position="360"/>
    </location>
</feature>
<feature type="helix" evidence="5">
    <location>
        <begin position="93"/>
        <end position="104"/>
    </location>
</feature>
<feature type="turn" evidence="5">
    <location>
        <begin position="105"/>
        <end position="107"/>
    </location>
</feature>
<feature type="helix" evidence="5">
    <location>
        <begin position="110"/>
        <end position="128"/>
    </location>
</feature>
<feature type="helix" evidence="5">
    <location>
        <begin position="138"/>
        <end position="149"/>
    </location>
</feature>
<feature type="turn" evidence="5">
    <location>
        <begin position="150"/>
        <end position="152"/>
    </location>
</feature>
<feature type="helix" evidence="5">
    <location>
        <begin position="154"/>
        <end position="173"/>
    </location>
</feature>
<feature type="helix" evidence="5">
    <location>
        <begin position="182"/>
        <end position="191"/>
    </location>
</feature>
<feature type="helix" evidence="5">
    <location>
        <begin position="192"/>
        <end position="194"/>
    </location>
</feature>
<sequence>MLTVKQIEAAKPKEKPYRLLDGNGLYLYVPVSGKKVWQLRYKIDGKEKILTVGKYPLMTLQEARDKAWTARKDISVGIDPVKAKKASSNNNSFSAIYKEWYEHKKQVWSVGYATELAKMFDDDILPIIGGLEIQDIEPMQLLEVIRRFEDRGAMERANKARRRCGEVFRYAIVTGRAKYNPAPDLADAMKGYRKKNFPFLPADQIPAFNKALATFSGSIVSLIATKVLRYTALRTKELRSMLWKNVDFENRIITIDASVMKGRKIHVVPMSDQVVELLTTLSSITKPVSEFVFAGRNDKKKPICENAVLLVIKQIGYEGLESGHGFRHEFSTIMNEHEWPADAIEVQLAHANGGSVRGIYNHAQYLDKRREMMQWWADWLDEKVE</sequence>
<reference key="1">
    <citation type="submission" date="1994-06" db="EMBL/GenBank/DDBJ databases">
        <authorList>
            <person name="Baumann S."/>
        </authorList>
    </citation>
    <scope>NUCLEOTIDE SEQUENCE [GENOMIC DNA]</scope>
    <source>
        <strain>K12</strain>
    </source>
</reference>
<reference key="2">
    <citation type="journal article" date="1997" name="DNA Res.">
        <title>Construction of a contiguous 874-kb sequence of the Escherichia coli-K12 genome corresponding to 50.0-68.8 min on the linkage map and analysis of its sequence features.</title>
        <authorList>
            <person name="Yamamoto Y."/>
            <person name="Aiba H."/>
            <person name="Baba T."/>
            <person name="Hayashi K."/>
            <person name="Inada T."/>
            <person name="Isono K."/>
            <person name="Itoh T."/>
            <person name="Kimura S."/>
            <person name="Kitagawa M."/>
            <person name="Makino K."/>
            <person name="Miki T."/>
            <person name="Mitsuhashi N."/>
            <person name="Mizobuchi K."/>
            <person name="Mori H."/>
            <person name="Nakade S."/>
            <person name="Nakamura Y."/>
            <person name="Nashimoto H."/>
            <person name="Oshima T."/>
            <person name="Oyama S."/>
            <person name="Saito N."/>
            <person name="Sampei G."/>
            <person name="Satoh Y."/>
            <person name="Sivasundaram S."/>
            <person name="Tagami H."/>
            <person name="Takahashi H."/>
            <person name="Takeda J."/>
            <person name="Takemoto K."/>
            <person name="Uehara K."/>
            <person name="Wada C."/>
            <person name="Yamagata S."/>
            <person name="Horiuchi T."/>
        </authorList>
    </citation>
    <scope>NUCLEOTIDE SEQUENCE [LARGE SCALE GENOMIC DNA]</scope>
    <source>
        <strain>K12 / W3110 / ATCC 27325 / DSM 5911</strain>
    </source>
</reference>
<reference key="3">
    <citation type="journal article" date="1997" name="Science">
        <title>The complete genome sequence of Escherichia coli K-12.</title>
        <authorList>
            <person name="Blattner F.R."/>
            <person name="Plunkett G. III"/>
            <person name="Bloch C.A."/>
            <person name="Perna N.T."/>
            <person name="Burland V."/>
            <person name="Riley M."/>
            <person name="Collado-Vides J."/>
            <person name="Glasner J.D."/>
            <person name="Rode C.K."/>
            <person name="Mayhew G.F."/>
            <person name="Gregor J."/>
            <person name="Davis N.W."/>
            <person name="Kirkpatrick H.A."/>
            <person name="Goeden M.A."/>
            <person name="Rose D.J."/>
            <person name="Mau B."/>
            <person name="Shao Y."/>
        </authorList>
    </citation>
    <scope>NUCLEOTIDE SEQUENCE [LARGE SCALE GENOMIC DNA]</scope>
    <source>
        <strain>K12 / MG1655 / ATCC 47076</strain>
    </source>
</reference>
<reference key="4">
    <citation type="journal article" date="2006" name="Mol. Syst. Biol.">
        <title>Highly accurate genome sequences of Escherichia coli K-12 strains MG1655 and W3110.</title>
        <authorList>
            <person name="Hayashi K."/>
            <person name="Morooka N."/>
            <person name="Yamamoto Y."/>
            <person name="Fujita K."/>
            <person name="Isono K."/>
            <person name="Choi S."/>
            <person name="Ohtsubo E."/>
            <person name="Baba T."/>
            <person name="Wanner B.L."/>
            <person name="Mori H."/>
            <person name="Horiuchi T."/>
        </authorList>
    </citation>
    <scope>NUCLEOTIDE SEQUENCE [LARGE SCALE GENOMIC DNA]</scope>
    <source>
        <strain>K12 / W3110 / ATCC 27325 / DSM 5911</strain>
    </source>
</reference>
<reference evidence="4" key="5">
    <citation type="submission" date="2009-05" db="PDB data bank">
        <title>NMR structure of fragment 87-196 from the putative phage integrase IntS of E. coli.</title>
        <authorList>
            <person name="Cort J.R."/>
            <person name="Montelione G.T."/>
            <person name="Kennedy M.A."/>
        </authorList>
    </citation>
    <scope>STRUCTURE BY NMR OF 87-196</scope>
</reference>
<keyword id="KW-0002">3D-structure</keyword>
<keyword id="KW-0229">DNA integration</keyword>
<keyword id="KW-0233">DNA recombination</keyword>
<keyword id="KW-0238">DNA-binding</keyword>
<keyword id="KW-1185">Reference proteome</keyword>
<keyword id="KW-1179">Viral genome integration</keyword>
<keyword id="KW-1160">Virus entry into host cell</keyword>
<gene>
    <name type="primary">intS</name>
    <name type="synonym">intC</name>
    <name type="synonym">yfdB</name>
    <name type="ordered locus">b2349</name>
    <name type="ordered locus">JW2345</name>
</gene>
<accession>P37326</accession>
<accession>P76942</accession>
<evidence type="ECO:0000255" key="1">
    <source>
        <dbReference type="PROSITE-ProRule" id="PRU01246"/>
    </source>
</evidence>
<evidence type="ECO:0000255" key="2">
    <source>
        <dbReference type="PROSITE-ProRule" id="PRU01248"/>
    </source>
</evidence>
<evidence type="ECO:0000305" key="3"/>
<evidence type="ECO:0007744" key="4">
    <source>
        <dbReference type="PDB" id="2KJ8"/>
    </source>
</evidence>
<evidence type="ECO:0007829" key="5">
    <source>
        <dbReference type="PDB" id="2KJ8"/>
    </source>
</evidence>
<protein>
    <recommendedName>
        <fullName evidence="3">Prophage integrase IntS</fullName>
    </recommendedName>
    <alternativeName>
        <fullName>Putative prophage CPS-53 integrase</fullName>
    </alternativeName>
</protein>
<organism>
    <name type="scientific">Escherichia coli (strain K12)</name>
    <dbReference type="NCBI Taxonomy" id="83333"/>
    <lineage>
        <taxon>Bacteria</taxon>
        <taxon>Pseudomonadati</taxon>
        <taxon>Pseudomonadota</taxon>
        <taxon>Gammaproteobacteria</taxon>
        <taxon>Enterobacterales</taxon>
        <taxon>Enterobacteriaceae</taxon>
        <taxon>Escherichia</taxon>
    </lineage>
</organism>
<dbReference type="EMBL" id="U11296">
    <property type="protein sequence ID" value="AAA19609.1"/>
    <property type="molecule type" value="Unassigned_DNA"/>
</dbReference>
<dbReference type="EMBL" id="U00096">
    <property type="protein sequence ID" value="AAC75408.1"/>
    <property type="molecule type" value="Genomic_DNA"/>
</dbReference>
<dbReference type="EMBL" id="AP009048">
    <property type="protein sequence ID" value="BAA16208.1"/>
    <property type="molecule type" value="Genomic_DNA"/>
</dbReference>
<dbReference type="PIR" id="I84552">
    <property type="entry name" value="I84552"/>
</dbReference>
<dbReference type="RefSeq" id="NP_416850.1">
    <property type="nucleotide sequence ID" value="NC_000913.3"/>
</dbReference>
<dbReference type="RefSeq" id="WP_000958671.1">
    <property type="nucleotide sequence ID" value="NZ_LN832404.1"/>
</dbReference>
<dbReference type="PDB" id="2KJ8">
    <property type="method" value="NMR"/>
    <property type="chains" value="A=87-196"/>
</dbReference>
<dbReference type="PDBsum" id="2KJ8"/>
<dbReference type="SMR" id="P37326"/>
<dbReference type="BioGRID" id="4259384">
    <property type="interactions" value="22"/>
</dbReference>
<dbReference type="DIP" id="DIP-10041N"/>
<dbReference type="FunCoup" id="P37326">
    <property type="interactions" value="76"/>
</dbReference>
<dbReference type="IntAct" id="P37326">
    <property type="interactions" value="12"/>
</dbReference>
<dbReference type="STRING" id="511145.b2349"/>
<dbReference type="PaxDb" id="511145-b2349"/>
<dbReference type="EnsemblBacteria" id="AAC75408">
    <property type="protein sequence ID" value="AAC75408"/>
    <property type="gene ID" value="b2349"/>
</dbReference>
<dbReference type="GeneID" id="946821"/>
<dbReference type="KEGG" id="ecj:JW2345"/>
<dbReference type="KEGG" id="eco:b2349"/>
<dbReference type="KEGG" id="ecoc:C3026_13070"/>
<dbReference type="PATRIC" id="fig|511145.12.peg.2445"/>
<dbReference type="EchoBASE" id="EB2312"/>
<dbReference type="eggNOG" id="COG0582">
    <property type="taxonomic scope" value="Bacteria"/>
</dbReference>
<dbReference type="HOGENOM" id="CLU_027562_0_0_6"/>
<dbReference type="InParanoid" id="P37326"/>
<dbReference type="OMA" id="HGFRHQF"/>
<dbReference type="OrthoDB" id="9795573at2"/>
<dbReference type="PhylomeDB" id="P37326"/>
<dbReference type="BioCyc" id="EcoCyc:G7218-MONOMER"/>
<dbReference type="EvolutionaryTrace" id="P37326"/>
<dbReference type="PRO" id="PR:P37326"/>
<dbReference type="Proteomes" id="UP000000625">
    <property type="component" value="Chromosome"/>
</dbReference>
<dbReference type="GO" id="GO:0042802">
    <property type="term" value="F:identical protein binding"/>
    <property type="evidence" value="ECO:0000314"/>
    <property type="project" value="EcoCyc"/>
</dbReference>
<dbReference type="GO" id="GO:0008979">
    <property type="term" value="F:prophage integrase activity"/>
    <property type="evidence" value="ECO:0000318"/>
    <property type="project" value="GO_Central"/>
</dbReference>
<dbReference type="GO" id="GO:0043565">
    <property type="term" value="F:sequence-specific DNA binding"/>
    <property type="evidence" value="ECO:0000314"/>
    <property type="project" value="EcoCyc"/>
</dbReference>
<dbReference type="GO" id="GO:0006310">
    <property type="term" value="P:DNA recombination"/>
    <property type="evidence" value="ECO:0007669"/>
    <property type="project" value="UniProtKB-KW"/>
</dbReference>
<dbReference type="GO" id="GO:0032359">
    <property type="term" value="P:provirus excision"/>
    <property type="evidence" value="ECO:0000315"/>
    <property type="project" value="EcoCyc"/>
</dbReference>
<dbReference type="GO" id="GO:0046718">
    <property type="term" value="P:symbiont entry into host cell"/>
    <property type="evidence" value="ECO:0007669"/>
    <property type="project" value="UniProtKB-KW"/>
</dbReference>
<dbReference type="GO" id="GO:0044826">
    <property type="term" value="P:viral genome integration into host DNA"/>
    <property type="evidence" value="ECO:0007669"/>
    <property type="project" value="UniProtKB-KW"/>
</dbReference>
<dbReference type="CDD" id="cd00801">
    <property type="entry name" value="INT_P4_C"/>
    <property type="match status" value="1"/>
</dbReference>
<dbReference type="FunFam" id="1.10.150.130:FF:000005">
    <property type="entry name" value="Prophage integrase IntS"/>
    <property type="match status" value="1"/>
</dbReference>
<dbReference type="FunFam" id="1.10.443.10:FF:000006">
    <property type="entry name" value="Prophage integrase IntS"/>
    <property type="match status" value="1"/>
</dbReference>
<dbReference type="Gene3D" id="1.10.150.130">
    <property type="match status" value="1"/>
</dbReference>
<dbReference type="Gene3D" id="3.30.160.390">
    <property type="entry name" value="Integrase, DNA-binding domain"/>
    <property type="match status" value="1"/>
</dbReference>
<dbReference type="Gene3D" id="1.10.443.10">
    <property type="entry name" value="Intergrase catalytic core"/>
    <property type="match status" value="1"/>
</dbReference>
<dbReference type="InterPro" id="IPR044068">
    <property type="entry name" value="CB"/>
</dbReference>
<dbReference type="InterPro" id="IPR011010">
    <property type="entry name" value="DNA_brk_join_enz"/>
</dbReference>
<dbReference type="InterPro" id="IPR013762">
    <property type="entry name" value="Integrase-like_cat_sf"/>
</dbReference>
<dbReference type="InterPro" id="IPR002104">
    <property type="entry name" value="Integrase_catalytic"/>
</dbReference>
<dbReference type="InterPro" id="IPR038488">
    <property type="entry name" value="Integrase_DNA-bd_sf"/>
</dbReference>
<dbReference type="InterPro" id="IPR025166">
    <property type="entry name" value="Integrase_DNA_bind_dom"/>
</dbReference>
<dbReference type="InterPro" id="IPR010998">
    <property type="entry name" value="Integrase_recombinase_N"/>
</dbReference>
<dbReference type="InterPro" id="IPR053876">
    <property type="entry name" value="Phage_int_M"/>
</dbReference>
<dbReference type="InterPro" id="IPR050808">
    <property type="entry name" value="Phage_Integrase"/>
</dbReference>
<dbReference type="PANTHER" id="PTHR30629">
    <property type="entry name" value="PROPHAGE INTEGRASE"/>
    <property type="match status" value="1"/>
</dbReference>
<dbReference type="PANTHER" id="PTHR30629:SF2">
    <property type="entry name" value="PROPHAGE INTEGRASE INTS-RELATED"/>
    <property type="match status" value="1"/>
</dbReference>
<dbReference type="Pfam" id="PF13356">
    <property type="entry name" value="Arm-DNA-bind_3"/>
    <property type="match status" value="1"/>
</dbReference>
<dbReference type="Pfam" id="PF22022">
    <property type="entry name" value="Phage_int_M"/>
    <property type="match status" value="1"/>
</dbReference>
<dbReference type="Pfam" id="PF00589">
    <property type="entry name" value="Phage_integrase"/>
    <property type="match status" value="1"/>
</dbReference>
<dbReference type="SUPFAM" id="SSF56349">
    <property type="entry name" value="DNA breaking-rejoining enzymes"/>
    <property type="match status" value="1"/>
</dbReference>
<dbReference type="PROSITE" id="PS51900">
    <property type="entry name" value="CB"/>
    <property type="match status" value="1"/>
</dbReference>
<dbReference type="PROSITE" id="PS51898">
    <property type="entry name" value="TYR_RECOMBINASE"/>
    <property type="match status" value="1"/>
</dbReference>
<proteinExistence type="evidence at protein level"/>
<name>INTS_ECOLI</name>
<comment type="function">
    <text>Integrase is necessary for integration of the phage into the host genome by site-specific recombination. In conjunction with excisionase, integrase is also necessary for excision of the prophage from the host genome.</text>
</comment>
<comment type="similarity">
    <text evidence="3">Belongs to the 'phage' integrase family.</text>
</comment>